<organism>
    <name type="scientific">Gluconobacter oxydans (strain 621H)</name>
    <name type="common">Gluconobacter suboxydans</name>
    <dbReference type="NCBI Taxonomy" id="290633"/>
    <lineage>
        <taxon>Bacteria</taxon>
        <taxon>Pseudomonadati</taxon>
        <taxon>Pseudomonadota</taxon>
        <taxon>Alphaproteobacteria</taxon>
        <taxon>Acetobacterales</taxon>
        <taxon>Acetobacteraceae</taxon>
        <taxon>Gluconobacter</taxon>
    </lineage>
</organism>
<dbReference type="EC" id="3.6.4.-" evidence="1"/>
<dbReference type="EMBL" id="CP000009">
    <property type="protein sequence ID" value="AAW61422.1"/>
    <property type="molecule type" value="Genomic_DNA"/>
</dbReference>
<dbReference type="RefSeq" id="WP_011253204.1">
    <property type="nucleotide sequence ID" value="NC_006677.1"/>
</dbReference>
<dbReference type="SMR" id="Q5FQC4"/>
<dbReference type="STRING" id="290633.GOX1682"/>
<dbReference type="KEGG" id="gox:GOX1682"/>
<dbReference type="eggNOG" id="COG2255">
    <property type="taxonomic scope" value="Bacteria"/>
</dbReference>
<dbReference type="HOGENOM" id="CLU_055599_1_0_5"/>
<dbReference type="Proteomes" id="UP000006375">
    <property type="component" value="Chromosome"/>
</dbReference>
<dbReference type="GO" id="GO:0005737">
    <property type="term" value="C:cytoplasm"/>
    <property type="evidence" value="ECO:0007669"/>
    <property type="project" value="UniProtKB-SubCell"/>
</dbReference>
<dbReference type="GO" id="GO:0048476">
    <property type="term" value="C:Holliday junction resolvase complex"/>
    <property type="evidence" value="ECO:0007669"/>
    <property type="project" value="UniProtKB-UniRule"/>
</dbReference>
<dbReference type="GO" id="GO:0005524">
    <property type="term" value="F:ATP binding"/>
    <property type="evidence" value="ECO:0007669"/>
    <property type="project" value="UniProtKB-UniRule"/>
</dbReference>
<dbReference type="GO" id="GO:0016887">
    <property type="term" value="F:ATP hydrolysis activity"/>
    <property type="evidence" value="ECO:0007669"/>
    <property type="project" value="InterPro"/>
</dbReference>
<dbReference type="GO" id="GO:0000400">
    <property type="term" value="F:four-way junction DNA binding"/>
    <property type="evidence" value="ECO:0007669"/>
    <property type="project" value="UniProtKB-UniRule"/>
</dbReference>
<dbReference type="GO" id="GO:0009378">
    <property type="term" value="F:four-way junction helicase activity"/>
    <property type="evidence" value="ECO:0007669"/>
    <property type="project" value="InterPro"/>
</dbReference>
<dbReference type="GO" id="GO:0006310">
    <property type="term" value="P:DNA recombination"/>
    <property type="evidence" value="ECO:0007669"/>
    <property type="project" value="UniProtKB-UniRule"/>
</dbReference>
<dbReference type="GO" id="GO:0006281">
    <property type="term" value="P:DNA repair"/>
    <property type="evidence" value="ECO:0007669"/>
    <property type="project" value="UniProtKB-UniRule"/>
</dbReference>
<dbReference type="CDD" id="cd00009">
    <property type="entry name" value="AAA"/>
    <property type="match status" value="1"/>
</dbReference>
<dbReference type="Gene3D" id="1.10.8.60">
    <property type="match status" value="1"/>
</dbReference>
<dbReference type="Gene3D" id="3.40.50.300">
    <property type="entry name" value="P-loop containing nucleotide triphosphate hydrolases"/>
    <property type="match status" value="1"/>
</dbReference>
<dbReference type="Gene3D" id="1.10.10.10">
    <property type="entry name" value="Winged helix-like DNA-binding domain superfamily/Winged helix DNA-binding domain"/>
    <property type="match status" value="1"/>
</dbReference>
<dbReference type="HAMAP" id="MF_00016">
    <property type="entry name" value="DNA_HJ_migration_RuvB"/>
    <property type="match status" value="1"/>
</dbReference>
<dbReference type="InterPro" id="IPR003593">
    <property type="entry name" value="AAA+_ATPase"/>
</dbReference>
<dbReference type="InterPro" id="IPR041445">
    <property type="entry name" value="AAA_lid_4"/>
</dbReference>
<dbReference type="InterPro" id="IPR004605">
    <property type="entry name" value="DNA_helicase_Holl-junc_RuvB"/>
</dbReference>
<dbReference type="InterPro" id="IPR027417">
    <property type="entry name" value="P-loop_NTPase"/>
</dbReference>
<dbReference type="InterPro" id="IPR008824">
    <property type="entry name" value="RuvB-like_N"/>
</dbReference>
<dbReference type="InterPro" id="IPR008823">
    <property type="entry name" value="RuvB_C"/>
</dbReference>
<dbReference type="InterPro" id="IPR036388">
    <property type="entry name" value="WH-like_DNA-bd_sf"/>
</dbReference>
<dbReference type="InterPro" id="IPR036390">
    <property type="entry name" value="WH_DNA-bd_sf"/>
</dbReference>
<dbReference type="NCBIfam" id="NF000868">
    <property type="entry name" value="PRK00080.1"/>
    <property type="match status" value="1"/>
</dbReference>
<dbReference type="NCBIfam" id="TIGR00635">
    <property type="entry name" value="ruvB"/>
    <property type="match status" value="1"/>
</dbReference>
<dbReference type="PANTHER" id="PTHR42848">
    <property type="match status" value="1"/>
</dbReference>
<dbReference type="PANTHER" id="PTHR42848:SF1">
    <property type="entry name" value="HOLLIDAY JUNCTION BRANCH MIGRATION COMPLEX SUBUNIT RUVB"/>
    <property type="match status" value="1"/>
</dbReference>
<dbReference type="Pfam" id="PF17864">
    <property type="entry name" value="AAA_lid_4"/>
    <property type="match status" value="1"/>
</dbReference>
<dbReference type="Pfam" id="PF05491">
    <property type="entry name" value="RuvB_C"/>
    <property type="match status" value="1"/>
</dbReference>
<dbReference type="Pfam" id="PF05496">
    <property type="entry name" value="RuvB_N"/>
    <property type="match status" value="1"/>
</dbReference>
<dbReference type="SMART" id="SM00382">
    <property type="entry name" value="AAA"/>
    <property type="match status" value="1"/>
</dbReference>
<dbReference type="SUPFAM" id="SSF52540">
    <property type="entry name" value="P-loop containing nucleoside triphosphate hydrolases"/>
    <property type="match status" value="1"/>
</dbReference>
<dbReference type="SUPFAM" id="SSF46785">
    <property type="entry name" value="Winged helix' DNA-binding domain"/>
    <property type="match status" value="1"/>
</dbReference>
<comment type="function">
    <text evidence="1">The RuvA-RuvB-RuvC complex processes Holliday junction (HJ) DNA during genetic recombination and DNA repair, while the RuvA-RuvB complex plays an important role in the rescue of blocked DNA replication forks via replication fork reversal (RFR). RuvA specifically binds to HJ cruciform DNA, conferring on it an open structure. The RuvB hexamer acts as an ATP-dependent pump, pulling dsDNA into and through the RuvAB complex. RuvB forms 2 homohexamers on either side of HJ DNA bound by 1 or 2 RuvA tetramers; 4 subunits per hexamer contact DNA at a time. Coordinated motions by a converter formed by DNA-disengaged RuvB subunits stimulates ATP hydrolysis and nucleotide exchange. Immobilization of the converter enables RuvB to convert the ATP-contained energy into a lever motion, pulling 2 nucleotides of DNA out of the RuvA tetramer per ATP hydrolyzed, thus driving DNA branch migration. The RuvB motors rotate together with the DNA substrate, which together with the progressing nucleotide cycle form the mechanistic basis for DNA recombination by continuous HJ branch migration. Branch migration allows RuvC to scan DNA until it finds its consensus sequence, where it cleaves and resolves cruciform DNA.</text>
</comment>
<comment type="catalytic activity">
    <reaction evidence="1">
        <text>ATP + H2O = ADP + phosphate + H(+)</text>
        <dbReference type="Rhea" id="RHEA:13065"/>
        <dbReference type="ChEBI" id="CHEBI:15377"/>
        <dbReference type="ChEBI" id="CHEBI:15378"/>
        <dbReference type="ChEBI" id="CHEBI:30616"/>
        <dbReference type="ChEBI" id="CHEBI:43474"/>
        <dbReference type="ChEBI" id="CHEBI:456216"/>
    </reaction>
</comment>
<comment type="subunit">
    <text evidence="1">Homohexamer. Forms an RuvA(8)-RuvB(12)-Holliday junction (HJ) complex. HJ DNA is sandwiched between 2 RuvA tetramers; dsDNA enters through RuvA and exits via RuvB. An RuvB hexamer assembles on each DNA strand where it exits the tetramer. Each RuvB hexamer is contacted by two RuvA subunits (via domain III) on 2 adjacent RuvB subunits; this complex drives branch migration. In the full resolvosome a probable DNA-RuvA(4)-RuvB(12)-RuvC(2) complex forms which resolves the HJ.</text>
</comment>
<comment type="subcellular location">
    <subcellularLocation>
        <location evidence="1">Cytoplasm</location>
    </subcellularLocation>
</comment>
<comment type="domain">
    <text evidence="1">Has 3 domains, the large (RuvB-L) and small ATPase (RuvB-S) domains and the C-terminal head (RuvB-H) domain. The head domain binds DNA, while the ATPase domains jointly bind ATP, ADP or are empty depending on the state of the subunit in the translocation cycle. During a single DNA translocation step the structure of each domain remains the same, but their relative positions change.</text>
</comment>
<comment type="similarity">
    <text evidence="1">Belongs to the RuvB family.</text>
</comment>
<name>RUVB_GLUOX</name>
<evidence type="ECO:0000255" key="1">
    <source>
        <dbReference type="HAMAP-Rule" id="MF_00016"/>
    </source>
</evidence>
<evidence type="ECO:0000256" key="2">
    <source>
        <dbReference type="SAM" id="MobiDB-lite"/>
    </source>
</evidence>
<accession>Q5FQC4</accession>
<feature type="chain" id="PRO_0000235372" description="Holliday junction branch migration complex subunit RuvB">
    <location>
        <begin position="1"/>
        <end position="349"/>
    </location>
</feature>
<feature type="region of interest" description="Large ATPase domain (RuvB-L)" evidence="1">
    <location>
        <begin position="1"/>
        <end position="183"/>
    </location>
</feature>
<feature type="region of interest" description="Disordered" evidence="2">
    <location>
        <begin position="1"/>
        <end position="25"/>
    </location>
</feature>
<feature type="region of interest" description="Small ATPAse domain (RuvB-S)" evidence="1">
    <location>
        <begin position="184"/>
        <end position="254"/>
    </location>
</feature>
<feature type="region of interest" description="Head domain (RuvB-H)" evidence="1">
    <location>
        <begin position="257"/>
        <end position="349"/>
    </location>
</feature>
<feature type="compositionally biased region" description="Basic and acidic residues" evidence="2">
    <location>
        <begin position="1"/>
        <end position="15"/>
    </location>
</feature>
<feature type="binding site" evidence="1">
    <location>
        <position position="22"/>
    </location>
    <ligand>
        <name>ATP</name>
        <dbReference type="ChEBI" id="CHEBI:30616"/>
    </ligand>
</feature>
<feature type="binding site" evidence="1">
    <location>
        <position position="23"/>
    </location>
    <ligand>
        <name>ATP</name>
        <dbReference type="ChEBI" id="CHEBI:30616"/>
    </ligand>
</feature>
<feature type="binding site" evidence="1">
    <location>
        <position position="64"/>
    </location>
    <ligand>
        <name>ATP</name>
        <dbReference type="ChEBI" id="CHEBI:30616"/>
    </ligand>
</feature>
<feature type="binding site" evidence="1">
    <location>
        <position position="67"/>
    </location>
    <ligand>
        <name>ATP</name>
        <dbReference type="ChEBI" id="CHEBI:30616"/>
    </ligand>
</feature>
<feature type="binding site" evidence="1">
    <location>
        <position position="68"/>
    </location>
    <ligand>
        <name>ATP</name>
        <dbReference type="ChEBI" id="CHEBI:30616"/>
    </ligand>
</feature>
<feature type="binding site" evidence="1">
    <location>
        <position position="68"/>
    </location>
    <ligand>
        <name>Mg(2+)</name>
        <dbReference type="ChEBI" id="CHEBI:18420"/>
    </ligand>
</feature>
<feature type="binding site" evidence="1">
    <location>
        <position position="69"/>
    </location>
    <ligand>
        <name>ATP</name>
        <dbReference type="ChEBI" id="CHEBI:30616"/>
    </ligand>
</feature>
<feature type="binding site" evidence="1">
    <location>
        <begin position="130"/>
        <end position="132"/>
    </location>
    <ligand>
        <name>ATP</name>
        <dbReference type="ChEBI" id="CHEBI:30616"/>
    </ligand>
</feature>
<feature type="binding site" evidence="1">
    <location>
        <position position="173"/>
    </location>
    <ligand>
        <name>ATP</name>
        <dbReference type="ChEBI" id="CHEBI:30616"/>
    </ligand>
</feature>
<feature type="binding site" evidence="1">
    <location>
        <position position="183"/>
    </location>
    <ligand>
        <name>ATP</name>
        <dbReference type="ChEBI" id="CHEBI:30616"/>
    </ligand>
</feature>
<feature type="binding site" evidence="1">
    <location>
        <position position="220"/>
    </location>
    <ligand>
        <name>ATP</name>
        <dbReference type="ChEBI" id="CHEBI:30616"/>
    </ligand>
</feature>
<feature type="binding site" evidence="1">
    <location>
        <position position="293"/>
    </location>
    <ligand>
        <name>DNA</name>
        <dbReference type="ChEBI" id="CHEBI:16991"/>
    </ligand>
</feature>
<feature type="binding site" evidence="1">
    <location>
        <position position="312"/>
    </location>
    <ligand>
        <name>DNA</name>
        <dbReference type="ChEBI" id="CHEBI:16991"/>
    </ligand>
</feature>
<feature type="binding site" evidence="1">
    <location>
        <position position="317"/>
    </location>
    <ligand>
        <name>DNA</name>
        <dbReference type="ChEBI" id="CHEBI:16991"/>
    </ligand>
</feature>
<protein>
    <recommendedName>
        <fullName evidence="1">Holliday junction branch migration complex subunit RuvB</fullName>
        <ecNumber evidence="1">3.6.4.-</ecNumber>
    </recommendedName>
</protein>
<proteinExistence type="inferred from homology"/>
<gene>
    <name evidence="1" type="primary">ruvB</name>
    <name type="ordered locus">GOX1682</name>
</gene>
<reference key="1">
    <citation type="journal article" date="2005" name="Nat. Biotechnol.">
        <title>Complete genome sequence of the acetic acid bacterium Gluconobacter oxydans.</title>
        <authorList>
            <person name="Prust C."/>
            <person name="Hoffmeister M."/>
            <person name="Liesegang H."/>
            <person name="Wiezer A."/>
            <person name="Fricke W.F."/>
            <person name="Ehrenreich A."/>
            <person name="Gottschalk G."/>
            <person name="Deppenmeier U."/>
        </authorList>
    </citation>
    <scope>NUCLEOTIDE SEQUENCE [LARGE SCALE GENOMIC DNA]</scope>
    <source>
        <strain>621H</strain>
    </source>
</reference>
<keyword id="KW-0067">ATP-binding</keyword>
<keyword id="KW-0963">Cytoplasm</keyword>
<keyword id="KW-0227">DNA damage</keyword>
<keyword id="KW-0233">DNA recombination</keyword>
<keyword id="KW-0234">DNA repair</keyword>
<keyword id="KW-0238">DNA-binding</keyword>
<keyword id="KW-0378">Hydrolase</keyword>
<keyword id="KW-0547">Nucleotide-binding</keyword>
<keyword id="KW-1185">Reference proteome</keyword>
<sequence>MSDDYRETDPTRQPEDMGEGSLRPETLADFTGQKASRENLAIFIEAARARNEALDHVLLHGPPGLGKTTLAQIVARELGVGFRATSGPVIQRAGDLAAILTNLQPRDVLFIDEIHRLQPAIEEVLYPAMEDFQLDLIIGEGPAARSVRIDLAPFTLVAATTRAGLLATPLRDRFGIPLRLVFYTPEELRAIVSRGALKLGMRLTDDGAEEIARRSRGTPRIAGRLLRRVRDFALVSKHAVVDRALADAALGRLEVDERGLDAMDRRYLKRIAEHHHGGPVGVETLAAGLAEARDTLEDVIEPYLIQEGLVLRTARGRMLGEAGWRHLGLTPPASQVDLLSSLEQDDSAP</sequence>